<comment type="function">
    <text evidence="4 5">Guanine nucleotide exchange factor (GEF) regulating clathrin-mediated endocytosis through RAB35 activation. Promotes the exchange of GDP to GTP, converting inactive GDP-bound RAB35 into its active GTP-bound form. Regulates clathrin-mediated endocytosis of synaptic vesicles and mediates exit from early endosomes (PubMed:17182770, PubMed:20159556). Binds phosphatidylinositol-phosphates (PtdInsPs), with some preference for PtdIns(3)P (PubMed:20159556).</text>
</comment>
<comment type="activity regulation">
    <text evidence="1">The guanine nucleotide exchange factor (GEF) activity is autoinhibited. Autoinhibition may be the result of intramolecular interaction between the DENN domain and the C-terminus, which is disrupted upon phosphorylation. Activation is regulated by Akt activation.</text>
</comment>
<comment type="subunit">
    <text evidence="1 4 5">Interacts with RAB35 (PubMed:20159556). Interacts with clathrin and with the adapter protein complex 2, AP-2 (By similarity). Interacts with ITSN1 and SH3GL2 (PubMed:17182770). Interacts (when phosphorylated) with YWHAE (By similarity).</text>
</comment>
<comment type="interaction">
    <interactant intactId="EBI-7186684">
        <id>Q8K382</id>
    </interactant>
    <interactant intactId="EBI-645386">
        <id>Q9Z0R4</id>
        <label>Itsn1</label>
    </interactant>
    <organismsDiffer>false</organismsDiffer>
    <experiments>3</experiments>
</comment>
<comment type="interaction">
    <interactant intactId="EBI-7186684">
        <id>Q8K382</id>
    </interactant>
    <interactant intactId="EBI-77971">
        <id>Q62420</id>
        <label>Sh3gl2</label>
    </interactant>
    <organismsDiffer>false</organismsDiffer>
    <experiments>2</experiments>
</comment>
<comment type="subcellular location">
    <subcellularLocation>
        <location evidence="4 5">Cytoplasmic vesicle</location>
        <location evidence="4 5">Clathrin-coated vesicle membrane</location>
        <topology evidence="4 5">Peripheral membrane protein</topology>
    </subcellularLocation>
    <subcellularLocation>
        <location evidence="4">Presynaptic cell membrane</location>
    </subcellularLocation>
    <text evidence="5">Associates to membranes via lipid-binding activity.</text>
</comment>
<comment type="PTM">
    <text evidence="1">Phosphorylated on serine and/or threonine in an Akt-dependent manner. Phosphorylation probably regulates the guanine nucleotide exchange factor (GEF) activity, possibly by disrupting an intramolecular interaction between the DENN domain and the C-terminus of the protein, thereby relieving the autoinhibition.</text>
</comment>
<reference key="1">
    <citation type="journal article" date="2006" name="J. Neurosci.">
        <title>Connecdenn, a novel DENN domain-containing protein of neuronal clathrin-coated vesicles functioning in synaptic vesicle endocytosis.</title>
        <authorList>
            <person name="Allaire P.D."/>
            <person name="Ritter B."/>
            <person name="Thomas S."/>
            <person name="Burman J.L."/>
            <person name="Denisov A.Y."/>
            <person name="Legendre-Guillemin V."/>
            <person name="Harper S.Q."/>
            <person name="Davidson B.L."/>
            <person name="Gehring K."/>
            <person name="McPherson P.S."/>
        </authorList>
    </citation>
    <scope>NUCLEOTIDE SEQUENCE [MRNA]</scope>
    <scope>FUNCTION</scope>
    <scope>INTERACTION WITH AP2B1; ITSN1 AND SH3GL2</scope>
    <scope>SUBCELLULAR LOCATION</scope>
    <scope>TISSUE SPECIFICITY</scope>
    <source>
        <strain>FVB/N</strain>
    </source>
</reference>
<reference key="2">
    <citation type="journal article" date="2009" name="PLoS Biol.">
        <title>Lineage-specific biology revealed by a finished genome assembly of the mouse.</title>
        <authorList>
            <person name="Church D.M."/>
            <person name="Goodstadt L."/>
            <person name="Hillier L.W."/>
            <person name="Zody M.C."/>
            <person name="Goldstein S."/>
            <person name="She X."/>
            <person name="Bult C.J."/>
            <person name="Agarwala R."/>
            <person name="Cherry J.L."/>
            <person name="DiCuccio M."/>
            <person name="Hlavina W."/>
            <person name="Kapustin Y."/>
            <person name="Meric P."/>
            <person name="Maglott D."/>
            <person name="Birtle Z."/>
            <person name="Marques A.C."/>
            <person name="Graves T."/>
            <person name="Zhou S."/>
            <person name="Teague B."/>
            <person name="Potamousis K."/>
            <person name="Churas C."/>
            <person name="Place M."/>
            <person name="Herschleb J."/>
            <person name="Runnheim R."/>
            <person name="Forrest D."/>
            <person name="Amos-Landgraf J."/>
            <person name="Schwartz D.C."/>
            <person name="Cheng Z."/>
            <person name="Lindblad-Toh K."/>
            <person name="Eichler E.E."/>
            <person name="Ponting C.P."/>
        </authorList>
    </citation>
    <scope>NUCLEOTIDE SEQUENCE [LARGE SCALE GENOMIC DNA]</scope>
    <source>
        <strain>C57BL/6J</strain>
    </source>
</reference>
<reference key="3">
    <citation type="journal article" date="2004" name="Genome Res.">
        <title>The status, quality, and expansion of the NIH full-length cDNA project: the Mammalian Gene Collection (MGC).</title>
        <authorList>
            <consortium name="The MGC Project Team"/>
        </authorList>
    </citation>
    <scope>NUCLEOTIDE SEQUENCE [LARGE SCALE MRNA]</scope>
    <source>
        <strain>FVB/N</strain>
        <tissue>Mammary tumor</tissue>
    </source>
</reference>
<reference key="4">
    <citation type="journal article" date="2009" name="Immunity">
        <title>The phagosomal proteome in interferon-gamma-activated macrophages.</title>
        <authorList>
            <person name="Trost M."/>
            <person name="English L."/>
            <person name="Lemieux S."/>
            <person name="Courcelles M."/>
            <person name="Desjardins M."/>
            <person name="Thibault P."/>
        </authorList>
    </citation>
    <scope>PHOSPHORYLATION [LARGE SCALE ANALYSIS] AT SER-473; SER-520 AND SER-523</scope>
    <scope>IDENTIFICATION BY MASS SPECTROMETRY [LARGE SCALE ANALYSIS]</scope>
</reference>
<reference key="5">
    <citation type="journal article" date="2010" name="Cell">
        <title>A tissue-specific atlas of mouse protein phosphorylation and expression.</title>
        <authorList>
            <person name="Huttlin E.L."/>
            <person name="Jedrychowski M.P."/>
            <person name="Elias J.E."/>
            <person name="Goswami T."/>
            <person name="Rad R."/>
            <person name="Beausoleil S.A."/>
            <person name="Villen J."/>
            <person name="Haas W."/>
            <person name="Sowa M.E."/>
            <person name="Gygi S.P."/>
        </authorList>
    </citation>
    <scope>PHOSPHORYLATION [LARGE SCALE ANALYSIS] AT SER-520; SER-522; SER-523; SER-538 AND SER-546</scope>
    <scope>IDENTIFICATION BY MASS SPECTROMETRY [LARGE SCALE ANALYSIS]</scope>
    <source>
        <tissue>Brain</tissue>
        <tissue>Kidney</tissue>
        <tissue>Lung</tissue>
        <tissue>Pancreas</tissue>
        <tissue>Spleen</tissue>
        <tissue>Testis</tissue>
    </source>
</reference>
<reference key="6">
    <citation type="journal article" date="2010" name="Mol. Cell">
        <title>The Connecdenn DENN domain: a GEF for Rab35 mediating cargo-specific exit from early endosomes.</title>
        <authorList>
            <person name="Allaire P.D."/>
            <person name="Marat A.L."/>
            <person name="Dall'Armi C."/>
            <person name="Di Paolo G."/>
            <person name="McPherson P.S."/>
            <person name="Ritter B."/>
        </authorList>
    </citation>
    <scope>FUNCTION</scope>
    <scope>SUBCELLULAR LOCATION</scope>
    <scope>INTERACTION WITH RAB35</scope>
    <scope>LIPID-BINDING</scope>
</reference>
<reference key="7">
    <citation type="journal article" date="2014" name="Mol. Cell. Proteomics">
        <title>Immunoaffinity enrichment and mass spectrometry analysis of protein methylation.</title>
        <authorList>
            <person name="Guo A."/>
            <person name="Gu H."/>
            <person name="Zhou J."/>
            <person name="Mulhern D."/>
            <person name="Wang Y."/>
            <person name="Lee K.A."/>
            <person name="Yang V."/>
            <person name="Aguiar M."/>
            <person name="Kornhauser J."/>
            <person name="Jia X."/>
            <person name="Ren J."/>
            <person name="Beausoleil S.A."/>
            <person name="Silva J.C."/>
            <person name="Vemulapalli V."/>
            <person name="Bedford M.T."/>
            <person name="Comb M.J."/>
        </authorList>
    </citation>
    <scope>METHYLATION [LARGE SCALE ANALYSIS] AT ARG-760</scope>
    <scope>IDENTIFICATION BY MASS SPECTROMETRY [LARGE SCALE ANALYSIS]</scope>
    <source>
        <tissue>Brain</tissue>
    </source>
</reference>
<keyword id="KW-1003">Cell membrane</keyword>
<keyword id="KW-0966">Cell projection</keyword>
<keyword id="KW-0968">Cytoplasmic vesicle</keyword>
<keyword id="KW-0344">Guanine-nucleotide releasing factor</keyword>
<keyword id="KW-0446">Lipid-binding</keyword>
<keyword id="KW-0472">Membrane</keyword>
<keyword id="KW-0488">Methylation</keyword>
<keyword id="KW-0597">Phosphoprotein</keyword>
<keyword id="KW-0653">Protein transport</keyword>
<keyword id="KW-1185">Reference proteome</keyword>
<keyword id="KW-0770">Synapse</keyword>
<keyword id="KW-0813">Transport</keyword>
<gene>
    <name type="primary">Dennd1a</name>
</gene>
<feature type="chain" id="PRO_0000242681" description="DENN domain-containing protein 1A">
    <location>
        <begin position="1"/>
        <end position="1016"/>
    </location>
</feature>
<feature type="domain" description="uDENN" evidence="2">
    <location>
        <begin position="13"/>
        <end position="145"/>
    </location>
</feature>
<feature type="domain" description="cDENN" evidence="2">
    <location>
        <begin position="162"/>
        <end position="298"/>
    </location>
</feature>
<feature type="domain" description="dDENN" evidence="2">
    <location>
        <begin position="300"/>
        <end position="378"/>
    </location>
</feature>
<feature type="region of interest" description="Disordered" evidence="3">
    <location>
        <begin position="453"/>
        <end position="565"/>
    </location>
</feature>
<feature type="region of interest" description="Disordered" evidence="3">
    <location>
        <begin position="681"/>
        <end position="737"/>
    </location>
</feature>
<feature type="region of interest" description="Disordered" evidence="3">
    <location>
        <begin position="763"/>
        <end position="783"/>
    </location>
</feature>
<feature type="region of interest" description="Disordered" evidence="3">
    <location>
        <begin position="935"/>
        <end position="1016"/>
    </location>
</feature>
<feature type="short sequence motif" description="FXDXF motif" evidence="1">
    <location>
        <begin position="381"/>
        <end position="385"/>
    </location>
</feature>
<feature type="short sequence motif" description="Clathrin box" evidence="1">
    <location>
        <begin position="569"/>
        <end position="578"/>
    </location>
</feature>
<feature type="compositionally biased region" description="Basic and acidic residues" evidence="3">
    <location>
        <begin position="479"/>
        <end position="489"/>
    </location>
</feature>
<feature type="compositionally biased region" description="Basic residues" evidence="3">
    <location>
        <begin position="500"/>
        <end position="509"/>
    </location>
</feature>
<feature type="compositionally biased region" description="Pro residues" evidence="3">
    <location>
        <begin position="954"/>
        <end position="970"/>
    </location>
</feature>
<feature type="compositionally biased region" description="Basic and acidic residues" evidence="3">
    <location>
        <begin position="977"/>
        <end position="988"/>
    </location>
</feature>
<feature type="compositionally biased region" description="Basic and acidic residues" evidence="3">
    <location>
        <begin position="1007"/>
        <end position="1016"/>
    </location>
</feature>
<feature type="modified residue" description="Phosphoserine" evidence="8">
    <location>
        <position position="473"/>
    </location>
</feature>
<feature type="modified residue" description="Phosphothreonine" evidence="1">
    <location>
        <position position="519"/>
    </location>
</feature>
<feature type="modified residue" description="Phosphoserine" evidence="8 9">
    <location>
        <position position="520"/>
    </location>
</feature>
<feature type="modified residue" description="Phosphoserine" evidence="9">
    <location>
        <position position="522"/>
    </location>
</feature>
<feature type="modified residue" description="Phosphoserine" evidence="8 9">
    <location>
        <position position="523"/>
    </location>
</feature>
<feature type="modified residue" description="Phosphoserine" evidence="1">
    <location>
        <position position="536"/>
    </location>
</feature>
<feature type="modified residue" description="Phosphoserine" evidence="9">
    <location>
        <position position="538"/>
    </location>
</feature>
<feature type="modified residue" description="Phosphoserine" evidence="9">
    <location>
        <position position="546"/>
    </location>
</feature>
<feature type="modified residue" description="Phosphoserine" evidence="1">
    <location>
        <position position="592"/>
    </location>
</feature>
<feature type="modified residue" description="Phosphoserine" evidence="1">
    <location>
        <position position="750"/>
    </location>
</feature>
<feature type="modified residue" description="Omega-N-methylarginine" evidence="10">
    <location>
        <position position="760"/>
    </location>
</feature>
<feature type="sequence conflict" description="In Ref. 1; ABD93329 and 3; AAH27786." evidence="7" ref="1 3">
    <original>H</original>
    <variation>Y</variation>
    <location>
        <position position="152"/>
    </location>
</feature>
<sequence>MGSRIKQNPETTFEVYVEVAYPRTGGTLSDPEVQRQFPEDYSDQEVLQTLTKFCFPFYVDSLTVSQVGQNFTFVLTDIDSKQRFGFCRLSSGAKSCFCILSYLPWFEVFYKLLNILADYTTKRQESQWNELLETLHRLPIPDPGVSVHLSVHSYFTVPDSRELPSIPENRNLTEYFVAVDVNNMLHLYASMLYERRILIICSKLSTLTACIHGSAAMLYPMYWQHVYIPVLPPHLLDYCCAPMPYLIGIHLSLMEKVRNMALDDVVILNVDTNTLETPFDDLQSLPNDVISSLKNRLKKVSTTTGDGVARAFLKAQAAFFGSYRNALKIEPEEPITFSEEAFVSHYRSGAMKQFLQNATQLQLFKQFIDGRLDLLNSGEGFSDVFEEEINMGEYAGSDKLYHQWLSTVRKGSGAILNTVKTKANPAMKTVYKFAKDHAKMGIKEVKNRLKQKDITENGCVSSAEDPLPKTMPSPQAETQDPRLREDRRPITVHFGQVRPPRPHVVRRPKSNITVEGRRTSVSSPEQPQPYRTLKESDSAEGDETESPEQLVREPWGPTPAPPDRAASIDLLEDVFSSLDVEAPLQPLGQAKSLEDLRAPKDLREQPGSFDYQRLDLCRSERGLSMAAALKLAHPYTKLWSLGQDDMAIPSKPSITSPEKPSALLGTSPALPLRPQNQEGILSPSIKEETPIPTPGSITIPRPQGRKTPELGIVPPPPTARPAKLQAAGGPLGDFSSEPLQMDRERQAALSPALLSGLLPRAVPQGPTELLQPPSPAPGAAGTGSDALLALLDPLNTAWSGSTIPSHPATPSAATPFIPQLSFPPTVTPTPFVQTPLNPFVPSVPVVPPSMPLSSTPARPFGTPPASLGPAYAPSILLSSSGFYAPHRSQPNLSALSMPNLFGQIPMGAHTSPLQPLGPPAVAPSRIRTLPLARSSARAAEAKQGLALRPGESPLLPPRPPQSLQPTPQPSVPTQARDPFEDLLRKTKQDVSPSPAPALAPASTSVEQLRRQWETFE</sequence>
<proteinExistence type="evidence at protein level"/>
<accession>Q8K382</accession>
<accession>A0MCI0</accession>
<accession>A2ALU2</accession>
<protein>
    <recommendedName>
        <fullName>DENN domain-containing protein 1A</fullName>
    </recommendedName>
    <alternativeName>
        <fullName evidence="6">Connecdenn 1</fullName>
        <shortName evidence="6">Connecdenn</shortName>
    </alternativeName>
</protein>
<dbReference type="EMBL" id="DQ448594">
    <property type="protein sequence ID" value="ABD93329.1"/>
    <property type="molecule type" value="mRNA"/>
</dbReference>
<dbReference type="EMBL" id="AL805959">
    <property type="status" value="NOT_ANNOTATED_CDS"/>
    <property type="molecule type" value="Genomic_DNA"/>
</dbReference>
<dbReference type="EMBL" id="AL928810">
    <property type="status" value="NOT_ANNOTATED_CDS"/>
    <property type="molecule type" value="Genomic_DNA"/>
</dbReference>
<dbReference type="EMBL" id="AL929186">
    <property type="status" value="NOT_ANNOTATED_CDS"/>
    <property type="molecule type" value="Genomic_DNA"/>
</dbReference>
<dbReference type="EMBL" id="AL929238">
    <property type="status" value="NOT_ANNOTATED_CDS"/>
    <property type="molecule type" value="Genomic_DNA"/>
</dbReference>
<dbReference type="EMBL" id="BC027786">
    <property type="protein sequence ID" value="AAH27786.1"/>
    <property type="molecule type" value="mRNA"/>
</dbReference>
<dbReference type="CCDS" id="CCDS16007.1"/>
<dbReference type="RefSeq" id="NP_666234.3">
    <property type="nucleotide sequence ID" value="NM_146122.3"/>
</dbReference>
<dbReference type="SMR" id="Q8K382"/>
<dbReference type="BioGRID" id="230688">
    <property type="interactions" value="1"/>
</dbReference>
<dbReference type="FunCoup" id="Q8K382">
    <property type="interactions" value="1644"/>
</dbReference>
<dbReference type="IntAct" id="Q8K382">
    <property type="interactions" value="2"/>
</dbReference>
<dbReference type="MINT" id="Q8K382"/>
<dbReference type="STRING" id="10090.ENSMUSP00000099848"/>
<dbReference type="GlyGen" id="Q8K382">
    <property type="glycosylation" value="8 sites, 1 N-linked glycan (1 site), 1 O-linked glycan (1 site)"/>
</dbReference>
<dbReference type="iPTMnet" id="Q8K382"/>
<dbReference type="PhosphoSitePlus" id="Q8K382"/>
<dbReference type="jPOST" id="Q8K382"/>
<dbReference type="PaxDb" id="10090-ENSMUSP00000099848"/>
<dbReference type="ProteomicsDB" id="279339"/>
<dbReference type="Pumba" id="Q8K382"/>
<dbReference type="Antibodypedia" id="16262">
    <property type="antibodies" value="147 antibodies from 24 providers"/>
</dbReference>
<dbReference type="Ensembl" id="ENSMUST00000102787.10">
    <property type="protein sequence ID" value="ENSMUSP00000099848.4"/>
    <property type="gene ID" value="ENSMUSG00000035392.18"/>
</dbReference>
<dbReference type="GeneID" id="227801"/>
<dbReference type="KEGG" id="mmu:227801"/>
<dbReference type="UCSC" id="uc008jng.2">
    <property type="organism name" value="mouse"/>
</dbReference>
<dbReference type="AGR" id="MGI:2442794"/>
<dbReference type="CTD" id="57706"/>
<dbReference type="MGI" id="MGI:2442794">
    <property type="gene designation" value="Dennd1a"/>
</dbReference>
<dbReference type="VEuPathDB" id="HostDB:ENSMUSG00000035392"/>
<dbReference type="eggNOG" id="KOG3569">
    <property type="taxonomic scope" value="Eukaryota"/>
</dbReference>
<dbReference type="GeneTree" id="ENSGT00940000156261"/>
<dbReference type="HOGENOM" id="CLU_008196_1_1_1"/>
<dbReference type="InParanoid" id="Q8K382"/>
<dbReference type="OMA" id="NTAWSGD"/>
<dbReference type="OrthoDB" id="206724at2759"/>
<dbReference type="PhylomeDB" id="Q8K382"/>
<dbReference type="TreeFam" id="TF343037"/>
<dbReference type="Reactome" id="R-MMU-8876198">
    <property type="pathway name" value="RAB GEFs exchange GTP for GDP on RABs"/>
</dbReference>
<dbReference type="BioGRID-ORCS" id="227801">
    <property type="hits" value="5 hits in 76 CRISPR screens"/>
</dbReference>
<dbReference type="ChiTaRS" id="Dennd1a">
    <property type="organism name" value="mouse"/>
</dbReference>
<dbReference type="PRO" id="PR:Q8K382"/>
<dbReference type="Proteomes" id="UP000000589">
    <property type="component" value="Chromosome 2"/>
</dbReference>
<dbReference type="RNAct" id="Q8K382">
    <property type="molecule type" value="protein"/>
</dbReference>
<dbReference type="Bgee" id="ENSMUSG00000035392">
    <property type="expression patterns" value="Expressed in retinal neural layer and 225 other cell types or tissues"/>
</dbReference>
<dbReference type="ExpressionAtlas" id="Q8K382">
    <property type="expression patterns" value="baseline and differential"/>
</dbReference>
<dbReference type="GO" id="GO:0030136">
    <property type="term" value="C:clathrin-coated vesicle"/>
    <property type="evidence" value="ECO:0000314"/>
    <property type="project" value="MGI"/>
</dbReference>
<dbReference type="GO" id="GO:0030665">
    <property type="term" value="C:clathrin-coated vesicle membrane"/>
    <property type="evidence" value="ECO:0000314"/>
    <property type="project" value="UniProtKB"/>
</dbReference>
<dbReference type="GO" id="GO:0005829">
    <property type="term" value="C:cytosol"/>
    <property type="evidence" value="ECO:0007669"/>
    <property type="project" value="Ensembl"/>
</dbReference>
<dbReference type="GO" id="GO:0030425">
    <property type="term" value="C:dendrite"/>
    <property type="evidence" value="ECO:0000314"/>
    <property type="project" value="MGI"/>
</dbReference>
<dbReference type="GO" id="GO:0043025">
    <property type="term" value="C:neuronal cell body"/>
    <property type="evidence" value="ECO:0000314"/>
    <property type="project" value="MGI"/>
</dbReference>
<dbReference type="GO" id="GO:0042734">
    <property type="term" value="C:presynaptic membrane"/>
    <property type="evidence" value="ECO:0007669"/>
    <property type="project" value="UniProtKB-SubCell"/>
</dbReference>
<dbReference type="GO" id="GO:0045202">
    <property type="term" value="C:synapse"/>
    <property type="evidence" value="ECO:0000314"/>
    <property type="project" value="MGI"/>
</dbReference>
<dbReference type="GO" id="GO:0005085">
    <property type="term" value="F:guanyl-nucleotide exchange factor activity"/>
    <property type="evidence" value="ECO:0000314"/>
    <property type="project" value="UniProtKB"/>
</dbReference>
<dbReference type="GO" id="GO:1901981">
    <property type="term" value="F:phosphatidylinositol phosphate binding"/>
    <property type="evidence" value="ECO:0000314"/>
    <property type="project" value="UniProtKB"/>
</dbReference>
<dbReference type="GO" id="GO:0032266">
    <property type="term" value="F:phosphatidylinositol-3-phosphate binding"/>
    <property type="evidence" value="ECO:0000314"/>
    <property type="project" value="UniProtKB"/>
</dbReference>
<dbReference type="GO" id="GO:0017124">
    <property type="term" value="F:SH3 domain binding"/>
    <property type="evidence" value="ECO:0000353"/>
    <property type="project" value="MGI"/>
</dbReference>
<dbReference type="GO" id="GO:0031267">
    <property type="term" value="F:small GTPase binding"/>
    <property type="evidence" value="ECO:0000353"/>
    <property type="project" value="UniProtKB"/>
</dbReference>
<dbReference type="GO" id="GO:0032456">
    <property type="term" value="P:endocytic recycling"/>
    <property type="evidence" value="ECO:0000314"/>
    <property type="project" value="UniProtKB"/>
</dbReference>
<dbReference type="GO" id="GO:0006897">
    <property type="term" value="P:endocytosis"/>
    <property type="evidence" value="ECO:0000250"/>
    <property type="project" value="UniProtKB"/>
</dbReference>
<dbReference type="GO" id="GO:0043547">
    <property type="term" value="P:positive regulation of GTPase activity"/>
    <property type="evidence" value="ECO:0000314"/>
    <property type="project" value="UniProtKB"/>
</dbReference>
<dbReference type="GO" id="GO:0015031">
    <property type="term" value="P:protein transport"/>
    <property type="evidence" value="ECO:0007669"/>
    <property type="project" value="UniProtKB-KW"/>
</dbReference>
<dbReference type="GO" id="GO:0048488">
    <property type="term" value="P:synaptic vesicle endocytosis"/>
    <property type="evidence" value="ECO:0000314"/>
    <property type="project" value="MGI"/>
</dbReference>
<dbReference type="FunFam" id="3.30.450.200:FF:000003">
    <property type="entry name" value="DENN domain containing 1A"/>
    <property type="match status" value="1"/>
</dbReference>
<dbReference type="FunFam" id="3.40.50.11500:FF:000001">
    <property type="entry name" value="Putative DENN domain-containing protein 1A"/>
    <property type="match status" value="1"/>
</dbReference>
<dbReference type="Gene3D" id="3.30.450.200">
    <property type="match status" value="1"/>
</dbReference>
<dbReference type="Gene3D" id="3.40.50.11500">
    <property type="match status" value="1"/>
</dbReference>
<dbReference type="Gene3D" id="6.10.140.1000">
    <property type="match status" value="1"/>
</dbReference>
<dbReference type="InterPro" id="IPR001194">
    <property type="entry name" value="cDENN_dom"/>
</dbReference>
<dbReference type="InterPro" id="IPR005112">
    <property type="entry name" value="dDENN_dom"/>
</dbReference>
<dbReference type="InterPro" id="IPR043153">
    <property type="entry name" value="DENN_C"/>
</dbReference>
<dbReference type="InterPro" id="IPR040032">
    <property type="entry name" value="DENND1A/B/C"/>
</dbReference>
<dbReference type="InterPro" id="IPR037516">
    <property type="entry name" value="Tripartite_DENN"/>
</dbReference>
<dbReference type="InterPro" id="IPR005113">
    <property type="entry name" value="uDENN_dom"/>
</dbReference>
<dbReference type="PANTHER" id="PTHR13196">
    <property type="entry name" value="DENN DOMAIN-CONTAINING"/>
    <property type="match status" value="1"/>
</dbReference>
<dbReference type="PANTHER" id="PTHR13196:SF22">
    <property type="entry name" value="DENN DOMAIN-CONTAINING PROTEIN 1A"/>
    <property type="match status" value="1"/>
</dbReference>
<dbReference type="Pfam" id="PF03455">
    <property type="entry name" value="dDENN"/>
    <property type="match status" value="1"/>
</dbReference>
<dbReference type="Pfam" id="PF02141">
    <property type="entry name" value="DENN"/>
    <property type="match status" value="1"/>
</dbReference>
<dbReference type="Pfam" id="PF03456">
    <property type="entry name" value="uDENN"/>
    <property type="match status" value="1"/>
</dbReference>
<dbReference type="SMART" id="SM00801">
    <property type="entry name" value="dDENN"/>
    <property type="match status" value="1"/>
</dbReference>
<dbReference type="SMART" id="SM00799">
    <property type="entry name" value="DENN"/>
    <property type="match status" value="1"/>
</dbReference>
<dbReference type="SMART" id="SM00800">
    <property type="entry name" value="uDENN"/>
    <property type="match status" value="1"/>
</dbReference>
<dbReference type="PROSITE" id="PS50211">
    <property type="entry name" value="DENN"/>
    <property type="match status" value="1"/>
</dbReference>
<evidence type="ECO:0000250" key="1">
    <source>
        <dbReference type="UniProtKB" id="Q8TEH3"/>
    </source>
</evidence>
<evidence type="ECO:0000255" key="2">
    <source>
        <dbReference type="PROSITE-ProRule" id="PRU00304"/>
    </source>
</evidence>
<evidence type="ECO:0000256" key="3">
    <source>
        <dbReference type="SAM" id="MobiDB-lite"/>
    </source>
</evidence>
<evidence type="ECO:0000269" key="4">
    <source>
    </source>
</evidence>
<evidence type="ECO:0000269" key="5">
    <source>
    </source>
</evidence>
<evidence type="ECO:0000303" key="6">
    <source>
    </source>
</evidence>
<evidence type="ECO:0000305" key="7"/>
<evidence type="ECO:0007744" key="8">
    <source>
    </source>
</evidence>
<evidence type="ECO:0007744" key="9">
    <source>
    </source>
</evidence>
<evidence type="ECO:0007744" key="10">
    <source>
    </source>
</evidence>
<organism>
    <name type="scientific">Mus musculus</name>
    <name type="common">Mouse</name>
    <dbReference type="NCBI Taxonomy" id="10090"/>
    <lineage>
        <taxon>Eukaryota</taxon>
        <taxon>Metazoa</taxon>
        <taxon>Chordata</taxon>
        <taxon>Craniata</taxon>
        <taxon>Vertebrata</taxon>
        <taxon>Euteleostomi</taxon>
        <taxon>Mammalia</taxon>
        <taxon>Eutheria</taxon>
        <taxon>Euarchontoglires</taxon>
        <taxon>Glires</taxon>
        <taxon>Rodentia</taxon>
        <taxon>Myomorpha</taxon>
        <taxon>Muroidea</taxon>
        <taxon>Muridae</taxon>
        <taxon>Murinae</taxon>
        <taxon>Mus</taxon>
        <taxon>Mus</taxon>
    </lineage>
</organism>
<name>DEN1A_MOUSE</name>